<protein>
    <recommendedName>
        <fullName evidence="1">SsrA-binding protein</fullName>
    </recommendedName>
    <alternativeName>
        <fullName evidence="1">Small protein B</fullName>
    </alternativeName>
</protein>
<sequence>MPKESGRKVVATNRKARHEYHLGDTYEAGLALMGTEVKSLREGRANLTDGFATFYGDELWLEAVYIPEYLNGSWNNHSARRRRKLLLHRAELIKISHKTREAGFTLVPLQLYFLDGKAKVEIALAKGKRDYDKRQALREAQDTRESLRAMREKNLG</sequence>
<accession>A9WPU0</accession>
<reference key="1">
    <citation type="journal article" date="2008" name="J. Bacteriol.">
        <title>Genome sequence of the fish pathogen Renibacterium salmoninarum suggests reductive evolution away from an environmental Arthrobacter ancestor.</title>
        <authorList>
            <person name="Wiens G.D."/>
            <person name="Rockey D.D."/>
            <person name="Wu Z."/>
            <person name="Chang J."/>
            <person name="Levy R."/>
            <person name="Crane S."/>
            <person name="Chen D.S."/>
            <person name="Capri G.R."/>
            <person name="Burnett J.R."/>
            <person name="Sudheesh P.S."/>
            <person name="Schipma M.J."/>
            <person name="Burd H."/>
            <person name="Bhattacharyya A."/>
            <person name="Rhodes L.D."/>
            <person name="Kaul R."/>
            <person name="Strom M.S."/>
        </authorList>
    </citation>
    <scope>NUCLEOTIDE SEQUENCE [LARGE SCALE GENOMIC DNA]</scope>
    <source>
        <strain>ATCC 33209 / DSM 20767 / JCM 11484 / NBRC 15589 / NCIMB 2235</strain>
    </source>
</reference>
<evidence type="ECO:0000255" key="1">
    <source>
        <dbReference type="HAMAP-Rule" id="MF_00023"/>
    </source>
</evidence>
<proteinExistence type="inferred from homology"/>
<gene>
    <name evidence="1" type="primary">smpB</name>
    <name type="ordered locus">RSal33209_1360</name>
</gene>
<organism>
    <name type="scientific">Renibacterium salmoninarum (strain ATCC 33209 / DSM 20767 / JCM 11484 / NBRC 15589 / NCIMB 2235)</name>
    <dbReference type="NCBI Taxonomy" id="288705"/>
    <lineage>
        <taxon>Bacteria</taxon>
        <taxon>Bacillati</taxon>
        <taxon>Actinomycetota</taxon>
        <taxon>Actinomycetes</taxon>
        <taxon>Micrococcales</taxon>
        <taxon>Micrococcaceae</taxon>
        <taxon>Renibacterium</taxon>
    </lineage>
</organism>
<feature type="chain" id="PRO_1000074363" description="SsrA-binding protein">
    <location>
        <begin position="1"/>
        <end position="156"/>
    </location>
</feature>
<dbReference type="EMBL" id="CP000910">
    <property type="protein sequence ID" value="ABY23097.1"/>
    <property type="molecule type" value="Genomic_DNA"/>
</dbReference>
<dbReference type="RefSeq" id="WP_012244778.1">
    <property type="nucleotide sequence ID" value="NC_010168.1"/>
</dbReference>
<dbReference type="SMR" id="A9WPU0"/>
<dbReference type="STRING" id="288705.RSal33209_1360"/>
<dbReference type="KEGG" id="rsa:RSal33209_1360"/>
<dbReference type="eggNOG" id="COG0691">
    <property type="taxonomic scope" value="Bacteria"/>
</dbReference>
<dbReference type="HOGENOM" id="CLU_108953_2_1_11"/>
<dbReference type="Proteomes" id="UP000002007">
    <property type="component" value="Chromosome"/>
</dbReference>
<dbReference type="GO" id="GO:0005829">
    <property type="term" value="C:cytosol"/>
    <property type="evidence" value="ECO:0007669"/>
    <property type="project" value="TreeGrafter"/>
</dbReference>
<dbReference type="GO" id="GO:0003723">
    <property type="term" value="F:RNA binding"/>
    <property type="evidence" value="ECO:0007669"/>
    <property type="project" value="UniProtKB-UniRule"/>
</dbReference>
<dbReference type="GO" id="GO:0070929">
    <property type="term" value="P:trans-translation"/>
    <property type="evidence" value="ECO:0007669"/>
    <property type="project" value="UniProtKB-UniRule"/>
</dbReference>
<dbReference type="CDD" id="cd09294">
    <property type="entry name" value="SmpB"/>
    <property type="match status" value="1"/>
</dbReference>
<dbReference type="Gene3D" id="2.40.280.10">
    <property type="match status" value="1"/>
</dbReference>
<dbReference type="HAMAP" id="MF_00023">
    <property type="entry name" value="SmpB"/>
    <property type="match status" value="1"/>
</dbReference>
<dbReference type="InterPro" id="IPR023620">
    <property type="entry name" value="SmpB"/>
</dbReference>
<dbReference type="InterPro" id="IPR000037">
    <property type="entry name" value="SsrA-bd_prot"/>
</dbReference>
<dbReference type="InterPro" id="IPR020081">
    <property type="entry name" value="SsrA-bd_prot_CS"/>
</dbReference>
<dbReference type="NCBIfam" id="NF003843">
    <property type="entry name" value="PRK05422.1"/>
    <property type="match status" value="1"/>
</dbReference>
<dbReference type="NCBIfam" id="TIGR00086">
    <property type="entry name" value="smpB"/>
    <property type="match status" value="1"/>
</dbReference>
<dbReference type="PANTHER" id="PTHR30308:SF2">
    <property type="entry name" value="SSRA-BINDING PROTEIN"/>
    <property type="match status" value="1"/>
</dbReference>
<dbReference type="PANTHER" id="PTHR30308">
    <property type="entry name" value="TMRNA-BINDING COMPONENT OF TRANS-TRANSLATION TAGGING COMPLEX"/>
    <property type="match status" value="1"/>
</dbReference>
<dbReference type="Pfam" id="PF01668">
    <property type="entry name" value="SmpB"/>
    <property type="match status" value="1"/>
</dbReference>
<dbReference type="SUPFAM" id="SSF74982">
    <property type="entry name" value="Small protein B (SmpB)"/>
    <property type="match status" value="1"/>
</dbReference>
<dbReference type="PROSITE" id="PS01317">
    <property type="entry name" value="SSRP"/>
    <property type="match status" value="1"/>
</dbReference>
<name>SSRP_RENSM</name>
<comment type="function">
    <text evidence="1">Required for rescue of stalled ribosomes mediated by trans-translation. Binds to transfer-messenger RNA (tmRNA), required for stable association of tmRNA with ribosomes. tmRNA and SmpB together mimic tRNA shape, replacing the anticodon stem-loop with SmpB. tmRNA is encoded by the ssrA gene; the 2 termini fold to resemble tRNA(Ala) and it encodes a 'tag peptide', a short internal open reading frame. During trans-translation Ala-aminoacylated tmRNA acts like a tRNA, entering the A-site of stalled ribosomes, displacing the stalled mRNA. The ribosome then switches to translate the ORF on the tmRNA; the nascent peptide is terminated with the 'tag peptide' encoded by the tmRNA and targeted for degradation. The ribosome is freed to recommence translation, which seems to be the essential function of trans-translation.</text>
</comment>
<comment type="subcellular location">
    <subcellularLocation>
        <location evidence="1">Cytoplasm</location>
    </subcellularLocation>
    <text evidence="1">The tmRNA-SmpB complex associates with stalled 70S ribosomes.</text>
</comment>
<comment type="similarity">
    <text evidence="1">Belongs to the SmpB family.</text>
</comment>
<keyword id="KW-0963">Cytoplasm</keyword>
<keyword id="KW-1185">Reference proteome</keyword>
<keyword id="KW-0694">RNA-binding</keyword>